<keyword id="KW-0012">Acyltransferase</keyword>
<keyword id="KW-0028">Amino-acid biosynthesis</keyword>
<keyword id="KW-0963">Cytoplasm</keyword>
<keyword id="KW-0220">Diaminopimelate biosynthesis</keyword>
<keyword id="KW-0457">Lysine biosynthesis</keyword>
<keyword id="KW-1185">Reference proteome</keyword>
<keyword id="KW-0677">Repeat</keyword>
<keyword id="KW-0808">Transferase</keyword>
<sequence length="273" mass="29557">MSLQQTIEQAFENRNEYSPATMPQDVRDAINQVLEQLDNGTLRVAEKKDGEWVVNQWAKKAVLLSFRLNDNYVQAAGEHIQFYDKVPTKFADWTEAQFKEAGVRVVPPAVARKGSYIAPGAVLMPSYVNIGAYVDQGAMVDTWATVGSCAQIGKNVHLSGGVGIGGVLEPLQANPTIIEDNCFIGARSEIVEGVIVEEGAVISMGVYIGQSTRIYDRETGEIHRGRVPAGSVVVPGSLPSEDGTHSLYAAIIVKKVDAQTRAKTSVNELLRLA</sequence>
<accession>Q4FTR7</accession>
<evidence type="ECO:0000255" key="1">
    <source>
        <dbReference type="HAMAP-Rule" id="MF_00811"/>
    </source>
</evidence>
<protein>
    <recommendedName>
        <fullName evidence="1">2,3,4,5-tetrahydropyridine-2,6-dicarboxylate N-succinyltransferase</fullName>
        <ecNumber evidence="1">2.3.1.117</ecNumber>
    </recommendedName>
    <alternativeName>
        <fullName evidence="1">Tetrahydrodipicolinate N-succinyltransferase</fullName>
        <shortName evidence="1">THDP succinyltransferase</shortName>
        <shortName evidence="1">THP succinyltransferase</shortName>
        <shortName evidence="1">Tetrahydropicolinate succinylase</shortName>
    </alternativeName>
</protein>
<gene>
    <name evidence="1" type="primary">dapD</name>
    <name type="ordered locus">Psyc_0737</name>
</gene>
<organism>
    <name type="scientific">Psychrobacter arcticus (strain DSM 17307 / VKM B-2377 / 273-4)</name>
    <dbReference type="NCBI Taxonomy" id="259536"/>
    <lineage>
        <taxon>Bacteria</taxon>
        <taxon>Pseudomonadati</taxon>
        <taxon>Pseudomonadota</taxon>
        <taxon>Gammaproteobacteria</taxon>
        <taxon>Moraxellales</taxon>
        <taxon>Moraxellaceae</taxon>
        <taxon>Psychrobacter</taxon>
    </lineage>
</organism>
<proteinExistence type="inferred from homology"/>
<dbReference type="EC" id="2.3.1.117" evidence="1"/>
<dbReference type="EMBL" id="CP000082">
    <property type="protein sequence ID" value="AAZ18591.1"/>
    <property type="molecule type" value="Genomic_DNA"/>
</dbReference>
<dbReference type="RefSeq" id="WP_011280018.1">
    <property type="nucleotide sequence ID" value="NC_007204.1"/>
</dbReference>
<dbReference type="SMR" id="Q4FTR7"/>
<dbReference type="STRING" id="259536.Psyc_0737"/>
<dbReference type="KEGG" id="par:Psyc_0737"/>
<dbReference type="eggNOG" id="COG2171">
    <property type="taxonomic scope" value="Bacteria"/>
</dbReference>
<dbReference type="HOGENOM" id="CLU_050859_0_1_6"/>
<dbReference type="OrthoDB" id="9775362at2"/>
<dbReference type="UniPathway" id="UPA00034">
    <property type="reaction ID" value="UER00019"/>
</dbReference>
<dbReference type="Proteomes" id="UP000000546">
    <property type="component" value="Chromosome"/>
</dbReference>
<dbReference type="GO" id="GO:0005737">
    <property type="term" value="C:cytoplasm"/>
    <property type="evidence" value="ECO:0007669"/>
    <property type="project" value="UniProtKB-SubCell"/>
</dbReference>
<dbReference type="GO" id="GO:0008666">
    <property type="term" value="F:2,3,4,5-tetrahydropyridine-2,6-dicarboxylate N-succinyltransferase activity"/>
    <property type="evidence" value="ECO:0007669"/>
    <property type="project" value="UniProtKB-UniRule"/>
</dbReference>
<dbReference type="GO" id="GO:0016779">
    <property type="term" value="F:nucleotidyltransferase activity"/>
    <property type="evidence" value="ECO:0007669"/>
    <property type="project" value="TreeGrafter"/>
</dbReference>
<dbReference type="GO" id="GO:0019877">
    <property type="term" value="P:diaminopimelate biosynthetic process"/>
    <property type="evidence" value="ECO:0007669"/>
    <property type="project" value="UniProtKB-UniRule"/>
</dbReference>
<dbReference type="GO" id="GO:0009089">
    <property type="term" value="P:lysine biosynthetic process via diaminopimelate"/>
    <property type="evidence" value="ECO:0007669"/>
    <property type="project" value="UniProtKB-UniRule"/>
</dbReference>
<dbReference type="CDD" id="cd03350">
    <property type="entry name" value="LbH_THP_succinylT"/>
    <property type="match status" value="1"/>
</dbReference>
<dbReference type="Gene3D" id="2.160.10.10">
    <property type="entry name" value="Hexapeptide repeat proteins"/>
    <property type="match status" value="1"/>
</dbReference>
<dbReference type="Gene3D" id="1.10.166.10">
    <property type="entry name" value="Tetrahydrodipicolinate-N-succinyltransferase, N-terminal domain"/>
    <property type="match status" value="1"/>
</dbReference>
<dbReference type="HAMAP" id="MF_00811">
    <property type="entry name" value="DapD"/>
    <property type="match status" value="1"/>
</dbReference>
<dbReference type="InterPro" id="IPR005664">
    <property type="entry name" value="DapD_Trfase_Hexpep_rpt_fam"/>
</dbReference>
<dbReference type="InterPro" id="IPR001451">
    <property type="entry name" value="Hexapep"/>
</dbReference>
<dbReference type="InterPro" id="IPR018357">
    <property type="entry name" value="Hexapep_transf_CS"/>
</dbReference>
<dbReference type="InterPro" id="IPR023180">
    <property type="entry name" value="THP_succinylTrfase_dom1"/>
</dbReference>
<dbReference type="InterPro" id="IPR037133">
    <property type="entry name" value="THP_succinylTrfase_N_sf"/>
</dbReference>
<dbReference type="InterPro" id="IPR011004">
    <property type="entry name" value="Trimer_LpxA-like_sf"/>
</dbReference>
<dbReference type="NCBIfam" id="TIGR00965">
    <property type="entry name" value="dapD"/>
    <property type="match status" value="1"/>
</dbReference>
<dbReference type="NCBIfam" id="NF008808">
    <property type="entry name" value="PRK11830.1"/>
    <property type="match status" value="1"/>
</dbReference>
<dbReference type="PANTHER" id="PTHR19136:SF52">
    <property type="entry name" value="2,3,4,5-TETRAHYDROPYRIDINE-2,6-DICARBOXYLATE N-SUCCINYLTRANSFERASE"/>
    <property type="match status" value="1"/>
</dbReference>
<dbReference type="PANTHER" id="PTHR19136">
    <property type="entry name" value="MOLYBDENUM COFACTOR GUANYLYLTRANSFERASE"/>
    <property type="match status" value="1"/>
</dbReference>
<dbReference type="Pfam" id="PF14602">
    <property type="entry name" value="Hexapep_2"/>
    <property type="match status" value="1"/>
</dbReference>
<dbReference type="Pfam" id="PF14805">
    <property type="entry name" value="THDPS_N_2"/>
    <property type="match status" value="1"/>
</dbReference>
<dbReference type="SUPFAM" id="SSF51161">
    <property type="entry name" value="Trimeric LpxA-like enzymes"/>
    <property type="match status" value="1"/>
</dbReference>
<dbReference type="PROSITE" id="PS00101">
    <property type="entry name" value="HEXAPEP_TRANSFERASES"/>
    <property type="match status" value="1"/>
</dbReference>
<comment type="catalytic activity">
    <reaction evidence="1">
        <text>(S)-2,3,4,5-tetrahydrodipicolinate + succinyl-CoA + H2O = (S)-2-succinylamino-6-oxoheptanedioate + CoA</text>
        <dbReference type="Rhea" id="RHEA:17325"/>
        <dbReference type="ChEBI" id="CHEBI:15377"/>
        <dbReference type="ChEBI" id="CHEBI:15685"/>
        <dbReference type="ChEBI" id="CHEBI:16845"/>
        <dbReference type="ChEBI" id="CHEBI:57287"/>
        <dbReference type="ChEBI" id="CHEBI:57292"/>
        <dbReference type="EC" id="2.3.1.117"/>
    </reaction>
</comment>
<comment type="pathway">
    <text evidence="1">Amino-acid biosynthesis; L-lysine biosynthesis via DAP pathway; LL-2,6-diaminopimelate from (S)-tetrahydrodipicolinate (succinylase route): step 1/3.</text>
</comment>
<comment type="subunit">
    <text evidence="1">Homotrimer.</text>
</comment>
<comment type="subcellular location">
    <subcellularLocation>
        <location evidence="1">Cytoplasm</location>
    </subcellularLocation>
</comment>
<comment type="similarity">
    <text evidence="1">Belongs to the transferase hexapeptide repeat family.</text>
</comment>
<reference key="1">
    <citation type="journal article" date="2010" name="Appl. Environ. Microbiol.">
        <title>The genome sequence of Psychrobacter arcticus 273-4, a psychroactive Siberian permafrost bacterium, reveals mechanisms for adaptation to low-temperature growth.</title>
        <authorList>
            <person name="Ayala-del-Rio H.L."/>
            <person name="Chain P.S."/>
            <person name="Grzymski J.J."/>
            <person name="Ponder M.A."/>
            <person name="Ivanova N."/>
            <person name="Bergholz P.W."/>
            <person name="Di Bartolo G."/>
            <person name="Hauser L."/>
            <person name="Land M."/>
            <person name="Bakermans C."/>
            <person name="Rodrigues D."/>
            <person name="Klappenbach J."/>
            <person name="Zarka D."/>
            <person name="Larimer F."/>
            <person name="Richardson P."/>
            <person name="Murray A."/>
            <person name="Thomashow M."/>
            <person name="Tiedje J.M."/>
        </authorList>
    </citation>
    <scope>NUCLEOTIDE SEQUENCE [LARGE SCALE GENOMIC DNA]</scope>
    <source>
        <strain>DSM 17307 / VKM B-2377 / 273-4</strain>
    </source>
</reference>
<name>DAPD_PSYA2</name>
<feature type="chain" id="PRO_0000196957" description="2,3,4,5-tetrahydropyridine-2,6-dicarboxylate N-succinyltransferase">
    <location>
        <begin position="1"/>
        <end position="273"/>
    </location>
</feature>
<feature type="binding site" evidence="1">
    <location>
        <position position="104"/>
    </location>
    <ligand>
        <name>substrate</name>
    </ligand>
</feature>
<feature type="binding site" evidence="1">
    <location>
        <position position="141"/>
    </location>
    <ligand>
        <name>substrate</name>
    </ligand>
</feature>